<reference key="1">
    <citation type="journal article" date="1997" name="Nature">
        <title>The complete genome sequence of the hyperthermophilic, sulphate-reducing archaeon Archaeoglobus fulgidus.</title>
        <authorList>
            <person name="Klenk H.-P."/>
            <person name="Clayton R.A."/>
            <person name="Tomb J.-F."/>
            <person name="White O."/>
            <person name="Nelson K.E."/>
            <person name="Ketchum K.A."/>
            <person name="Dodson R.J."/>
            <person name="Gwinn M.L."/>
            <person name="Hickey E.K."/>
            <person name="Peterson J.D."/>
            <person name="Richardson D.L."/>
            <person name="Kerlavage A.R."/>
            <person name="Graham D.E."/>
            <person name="Kyrpides N.C."/>
            <person name="Fleischmann R.D."/>
            <person name="Quackenbush J."/>
            <person name="Lee N.H."/>
            <person name="Sutton G.G."/>
            <person name="Gill S.R."/>
            <person name="Kirkness E.F."/>
            <person name="Dougherty B.A."/>
            <person name="McKenney K."/>
            <person name="Adams M.D."/>
            <person name="Loftus B.J."/>
            <person name="Peterson S.N."/>
            <person name="Reich C.I."/>
            <person name="McNeil L.K."/>
            <person name="Badger J.H."/>
            <person name="Glodek A."/>
            <person name="Zhou L."/>
            <person name="Overbeek R."/>
            <person name="Gocayne J.D."/>
            <person name="Weidman J.F."/>
            <person name="McDonald L.A."/>
            <person name="Utterback T.R."/>
            <person name="Cotton M.D."/>
            <person name="Spriggs T."/>
            <person name="Artiach P."/>
            <person name="Kaine B.P."/>
            <person name="Sykes S.M."/>
            <person name="Sadow P.W."/>
            <person name="D'Andrea K.P."/>
            <person name="Bowman C."/>
            <person name="Fujii C."/>
            <person name="Garland S.A."/>
            <person name="Mason T.M."/>
            <person name="Olsen G.J."/>
            <person name="Fraser C.M."/>
            <person name="Smith H.O."/>
            <person name="Woese C.R."/>
            <person name="Venter J.C."/>
        </authorList>
    </citation>
    <scope>NUCLEOTIDE SEQUENCE [LARGE SCALE GENOMIC DNA]</scope>
    <source>
        <strain>ATCC 49558 / DSM 4304 / JCM 9628 / NBRC 100126 / VC-16</strain>
    </source>
</reference>
<keyword id="KW-1185">Reference proteome</keyword>
<organism>
    <name type="scientific">Archaeoglobus fulgidus (strain ATCC 49558 / DSM 4304 / JCM 9628 / NBRC 100126 / VC-16)</name>
    <dbReference type="NCBI Taxonomy" id="224325"/>
    <lineage>
        <taxon>Archaea</taxon>
        <taxon>Methanobacteriati</taxon>
        <taxon>Methanobacteriota</taxon>
        <taxon>Archaeoglobi</taxon>
        <taxon>Archaeoglobales</taxon>
        <taxon>Archaeoglobaceae</taxon>
        <taxon>Archaeoglobus</taxon>
    </lineage>
</organism>
<accession>O30050</accession>
<dbReference type="EMBL" id="AE000782">
    <property type="protein sequence ID" value="AAB91044.1"/>
    <property type="molecule type" value="Genomic_DNA"/>
</dbReference>
<dbReference type="PIR" id="D69273">
    <property type="entry name" value="D69273"/>
</dbReference>
<dbReference type="RefSeq" id="WP_010877700.1">
    <property type="nucleotide sequence ID" value="NC_000917.1"/>
</dbReference>
<dbReference type="SMR" id="O30050"/>
<dbReference type="STRING" id="224325.AF_0188"/>
<dbReference type="PaxDb" id="224325-AF_0188"/>
<dbReference type="EnsemblBacteria" id="AAB91044">
    <property type="protein sequence ID" value="AAB91044"/>
    <property type="gene ID" value="AF_0188"/>
</dbReference>
<dbReference type="KEGG" id="afu:AF_0188"/>
<dbReference type="eggNOG" id="arCOG02062">
    <property type="taxonomic scope" value="Archaea"/>
</dbReference>
<dbReference type="HOGENOM" id="CLU_165255_1_2_2"/>
<dbReference type="OrthoDB" id="45650at2157"/>
<dbReference type="PhylomeDB" id="O30050"/>
<dbReference type="Proteomes" id="UP000002199">
    <property type="component" value="Chromosome"/>
</dbReference>
<dbReference type="CDD" id="cd00291">
    <property type="entry name" value="SirA_YedF_YeeD"/>
    <property type="match status" value="1"/>
</dbReference>
<dbReference type="Gene3D" id="3.30.110.40">
    <property type="entry name" value="TusA-like domain"/>
    <property type="match status" value="1"/>
</dbReference>
<dbReference type="InterPro" id="IPR001455">
    <property type="entry name" value="TusA-like"/>
</dbReference>
<dbReference type="InterPro" id="IPR036868">
    <property type="entry name" value="TusA-like_sf"/>
</dbReference>
<dbReference type="PANTHER" id="PTHR33279">
    <property type="entry name" value="SULFUR CARRIER PROTEIN YEDF-RELATED"/>
    <property type="match status" value="1"/>
</dbReference>
<dbReference type="PANTHER" id="PTHR33279:SF6">
    <property type="entry name" value="SULFUR CARRIER PROTEIN YEDF-RELATED"/>
    <property type="match status" value="1"/>
</dbReference>
<dbReference type="Pfam" id="PF01206">
    <property type="entry name" value="TusA"/>
    <property type="match status" value="1"/>
</dbReference>
<dbReference type="SUPFAM" id="SSF64307">
    <property type="entry name" value="SirA-like"/>
    <property type="match status" value="1"/>
</dbReference>
<dbReference type="PROSITE" id="PS01148">
    <property type="entry name" value="UPF0033"/>
    <property type="match status" value="1"/>
</dbReference>
<feature type="chain" id="PRO_0000159076" description="Putative sulfur carrier protein AF_0188">
    <location>
        <begin position="1"/>
        <end position="77"/>
    </location>
</feature>
<feature type="active site" description="Cysteine persulfide intermediate" evidence="1">
    <location>
        <position position="11"/>
    </location>
</feature>
<protein>
    <recommendedName>
        <fullName>Putative sulfur carrier protein AF_0188</fullName>
    </recommendedName>
</protein>
<proteinExistence type="inferred from homology"/>
<comment type="similarity">
    <text evidence="2">Belongs to the sulfur carrier protein TusA family.</text>
</comment>
<sequence length="77" mass="8702">MKQVDCIGLYCPEPVFRARKAMEESEVGEIIEILADDPAAESDIPVLVKKLGQELVEFEKLEDGVLRFVVKIVKEVR</sequence>
<evidence type="ECO:0000250" key="1">
    <source>
        <dbReference type="UniProtKB" id="P0A890"/>
    </source>
</evidence>
<evidence type="ECO:0000305" key="2"/>
<name>Y188_ARCFU</name>
<gene>
    <name type="ordered locus">AF_0188</name>
</gene>